<proteinExistence type="inferred from homology"/>
<reference key="1">
    <citation type="journal article" date="2003" name="Genome Res.">
        <title>Genome sequence of an M3 strain of Streptococcus pyogenes reveals a large-scale genomic rearrangement in invasive strains and new insights into phage evolution.</title>
        <authorList>
            <person name="Nakagawa I."/>
            <person name="Kurokawa K."/>
            <person name="Yamashita A."/>
            <person name="Nakata M."/>
            <person name="Tomiyasu Y."/>
            <person name="Okahashi N."/>
            <person name="Kawabata S."/>
            <person name="Yamazaki K."/>
            <person name="Shiba T."/>
            <person name="Yasunaga T."/>
            <person name="Hayashi H."/>
            <person name="Hattori M."/>
            <person name="Hamada S."/>
        </authorList>
    </citation>
    <scope>NUCLEOTIDE SEQUENCE [LARGE SCALE GENOMIC DNA]</scope>
    <source>
        <strain>SSI-1</strain>
    </source>
</reference>
<evidence type="ECO:0000255" key="1">
    <source>
        <dbReference type="HAMAP-Rule" id="MF_01368"/>
    </source>
</evidence>
<evidence type="ECO:0000305" key="2"/>
<feature type="chain" id="PRO_0000411495" description="Large ribosomal subunit protein bL17">
    <location>
        <begin position="1"/>
        <end position="128"/>
    </location>
</feature>
<gene>
    <name evidence="1" type="primary">rplQ</name>
    <name type="ordered locus">SPs0069</name>
</gene>
<name>RL17_STRPQ</name>
<protein>
    <recommendedName>
        <fullName evidence="1">Large ribosomal subunit protein bL17</fullName>
    </recommendedName>
    <alternativeName>
        <fullName evidence="2">50S ribosomal protein L17</fullName>
    </alternativeName>
</protein>
<keyword id="KW-0687">Ribonucleoprotein</keyword>
<keyword id="KW-0689">Ribosomal protein</keyword>
<sequence length="128" mass="14522">MAYRKLGRTSSQRKAMLRDLTTDLLINESIVTTEARAKEIRKTVEKMITLGKRGDLHARRQAAAYVRNEIASENYDEATDKYTSTTALQKLFSEIAPRYAERNGGYTRILKTEPRRGDAAPMAIIELV</sequence>
<comment type="subunit">
    <text evidence="1">Part of the 50S ribosomal subunit. Contacts protein L32.</text>
</comment>
<comment type="similarity">
    <text evidence="1">Belongs to the bacterial ribosomal protein bL17 family.</text>
</comment>
<dbReference type="EMBL" id="BA000034">
    <property type="protein sequence ID" value="BAC63164.1"/>
    <property type="molecule type" value="Genomic_DNA"/>
</dbReference>
<dbReference type="RefSeq" id="WP_002986602.1">
    <property type="nucleotide sequence ID" value="NC_004606.1"/>
</dbReference>
<dbReference type="SMR" id="P0DE11"/>
<dbReference type="GeneID" id="83703931"/>
<dbReference type="KEGG" id="sps:SPs0069"/>
<dbReference type="HOGENOM" id="CLU_074407_2_2_9"/>
<dbReference type="GO" id="GO:0022625">
    <property type="term" value="C:cytosolic large ribosomal subunit"/>
    <property type="evidence" value="ECO:0007669"/>
    <property type="project" value="TreeGrafter"/>
</dbReference>
<dbReference type="GO" id="GO:0003735">
    <property type="term" value="F:structural constituent of ribosome"/>
    <property type="evidence" value="ECO:0007669"/>
    <property type="project" value="InterPro"/>
</dbReference>
<dbReference type="GO" id="GO:0006412">
    <property type="term" value="P:translation"/>
    <property type="evidence" value="ECO:0007669"/>
    <property type="project" value="UniProtKB-UniRule"/>
</dbReference>
<dbReference type="FunFam" id="3.90.1030.10:FF:000002">
    <property type="entry name" value="50S ribosomal protein L17"/>
    <property type="match status" value="1"/>
</dbReference>
<dbReference type="Gene3D" id="3.90.1030.10">
    <property type="entry name" value="Ribosomal protein L17"/>
    <property type="match status" value="1"/>
</dbReference>
<dbReference type="HAMAP" id="MF_01368">
    <property type="entry name" value="Ribosomal_bL17"/>
    <property type="match status" value="1"/>
</dbReference>
<dbReference type="InterPro" id="IPR000456">
    <property type="entry name" value="Ribosomal_bL17"/>
</dbReference>
<dbReference type="InterPro" id="IPR047859">
    <property type="entry name" value="Ribosomal_bL17_CS"/>
</dbReference>
<dbReference type="InterPro" id="IPR036373">
    <property type="entry name" value="Ribosomal_bL17_sf"/>
</dbReference>
<dbReference type="NCBIfam" id="TIGR00059">
    <property type="entry name" value="L17"/>
    <property type="match status" value="1"/>
</dbReference>
<dbReference type="PANTHER" id="PTHR14413:SF16">
    <property type="entry name" value="LARGE RIBOSOMAL SUBUNIT PROTEIN BL17M"/>
    <property type="match status" value="1"/>
</dbReference>
<dbReference type="PANTHER" id="PTHR14413">
    <property type="entry name" value="RIBOSOMAL PROTEIN L17"/>
    <property type="match status" value="1"/>
</dbReference>
<dbReference type="Pfam" id="PF01196">
    <property type="entry name" value="Ribosomal_L17"/>
    <property type="match status" value="1"/>
</dbReference>
<dbReference type="SUPFAM" id="SSF64263">
    <property type="entry name" value="Prokaryotic ribosomal protein L17"/>
    <property type="match status" value="1"/>
</dbReference>
<dbReference type="PROSITE" id="PS01167">
    <property type="entry name" value="RIBOSOMAL_L17"/>
    <property type="match status" value="1"/>
</dbReference>
<accession>P0DE11</accession>
<accession>Q7CFK2</accession>
<accession>Q8P2Z2</accession>
<organism>
    <name type="scientific">Streptococcus pyogenes serotype M3 (strain SSI-1)</name>
    <dbReference type="NCBI Taxonomy" id="193567"/>
    <lineage>
        <taxon>Bacteria</taxon>
        <taxon>Bacillati</taxon>
        <taxon>Bacillota</taxon>
        <taxon>Bacilli</taxon>
        <taxon>Lactobacillales</taxon>
        <taxon>Streptococcaceae</taxon>
        <taxon>Streptococcus</taxon>
    </lineage>
</organism>